<protein>
    <recommendedName>
        <fullName>Urease subunit beta</fullName>
        <ecNumber>3.5.1.5</ecNumber>
    </recommendedName>
    <alternativeName>
        <fullName>15 kDa subunit</fullName>
    </alternativeName>
    <alternativeName>
        <fullName>Urea amidohydrolase subunit beta</fullName>
    </alternativeName>
</protein>
<name>URE2_MORMO</name>
<dbReference type="EC" id="3.5.1.5"/>
<dbReference type="PIR" id="B35389">
    <property type="entry name" value="B35389"/>
</dbReference>
<dbReference type="STRING" id="582.AL531_17685"/>
<dbReference type="UniPathway" id="UPA00258">
    <property type="reaction ID" value="UER00370"/>
</dbReference>
<dbReference type="GO" id="GO:0005737">
    <property type="term" value="C:cytoplasm"/>
    <property type="evidence" value="ECO:0007669"/>
    <property type="project" value="UniProtKB-SubCell"/>
</dbReference>
<dbReference type="GO" id="GO:0009039">
    <property type="term" value="F:urease activity"/>
    <property type="evidence" value="ECO:0007669"/>
    <property type="project" value="UniProtKB-EC"/>
</dbReference>
<dbReference type="GO" id="GO:0043419">
    <property type="term" value="P:urea catabolic process"/>
    <property type="evidence" value="ECO:0007669"/>
    <property type="project" value="UniProtKB-UniPathway"/>
</dbReference>
<accession>P17338</accession>
<reference key="1">
    <citation type="journal article" date="1990" name="J. Bacteriol.">
        <title>Morganella morganii urease: purification, characterization, and isolation of gene sequences.</title>
        <authorList>
            <person name="Hu L.-T."/>
            <person name="Nicholson E.B."/>
            <person name="Jones B.D."/>
            <person name="Lynch M.J."/>
            <person name="Mobley H.L.T."/>
        </authorList>
    </citation>
    <scope>PROTEIN SEQUENCE</scope>
</reference>
<feature type="chain" id="PRO_0000067585" description="Urease subunit beta">
    <location>
        <begin position="1"/>
        <end position="15" status="greater than"/>
    </location>
</feature>
<feature type="non-terminal residue">
    <location>
        <position position="15"/>
    </location>
</feature>
<organism>
    <name type="scientific">Morganella morganii</name>
    <name type="common">Proteus morganii</name>
    <dbReference type="NCBI Taxonomy" id="582"/>
    <lineage>
        <taxon>Bacteria</taxon>
        <taxon>Pseudomonadati</taxon>
        <taxon>Pseudomonadota</taxon>
        <taxon>Gammaproteobacteria</taxon>
        <taxon>Enterobacterales</taxon>
        <taxon>Morganellaceae</taxon>
        <taxon>Morganella</taxon>
    </lineage>
</organism>
<evidence type="ECO:0000250" key="1"/>
<evidence type="ECO:0000305" key="2"/>
<sequence length="15" mass="1530">SNTKQPTPLGGVIFA</sequence>
<gene>
    <name type="primary">ureB</name>
</gene>
<proteinExistence type="evidence at protein level"/>
<keyword id="KW-0963">Cytoplasm</keyword>
<keyword id="KW-0903">Direct protein sequencing</keyword>
<keyword id="KW-0378">Hydrolase</keyword>
<comment type="catalytic activity">
    <reaction>
        <text>urea + 2 H2O + H(+) = hydrogencarbonate + 2 NH4(+)</text>
        <dbReference type="Rhea" id="RHEA:20557"/>
        <dbReference type="ChEBI" id="CHEBI:15377"/>
        <dbReference type="ChEBI" id="CHEBI:15378"/>
        <dbReference type="ChEBI" id="CHEBI:16199"/>
        <dbReference type="ChEBI" id="CHEBI:17544"/>
        <dbReference type="ChEBI" id="CHEBI:28938"/>
        <dbReference type="EC" id="3.5.1.5"/>
    </reaction>
</comment>
<comment type="pathway">
    <text>Nitrogen metabolism; urea degradation; CO(2) and NH(3) from urea (urease route): step 1/1.</text>
</comment>
<comment type="subunit">
    <text evidence="1">Heterotrimer of UreA (gamma), UreB (beta) and UreC (alpha) subunits. Three heterotrimers associate to form the active enzyme (By similarity).</text>
</comment>
<comment type="subcellular location">
    <subcellularLocation>
        <location evidence="1">Cytoplasm</location>
    </subcellularLocation>
</comment>
<comment type="similarity">
    <text evidence="2">Belongs to the urease beta subunit family.</text>
</comment>